<sequence length="604" mass="69014">MIPSGLVYLLYPLGFLASLFFGSAFSIQWWLSKKRKEVYAPRSFWILSSIGATLMIVHGTIQSQFPVTVLHVINLIIYLRNLNITSSRPISFRATLVLMALSVVFVTLPFLYVNMEWMASPNIFHLPLPPAQLSWHLIGCLGLAIFSGRFLIQWFYIESNNTKDFPLLFWKIGLLGGLLALVYFIRIGDPINILCYGCGLFPSIANLRLFYKEQRSTPYLDTHCFLSAGEASGDILGGKLIQSIKSLYPNIRFWGVGGPAMRQEGLQPILNMEEFQVSGFAEVLGSLFRLYRNYRKILKTILKHKPATLIFIDFPDFHLLLIKKLRKHGYRGKIIHYVCPSIWAWRPKRKRILEQHLDMLLLILPFEEGLFKNTSLETVYLGHPLVEEISDYKEQASWKEKFLNSDRPIVAAFPGSRRGDISRNLRIQVQAFLNSSLSQTHQFVVSSSSAKYDEIIEDTLKAEGCQHSQIIPMNFRYELMRSCDCALAKCGTIVLETALNQTPTIVMCRLRPFDTFLAKYIFKILLPAYSLPNIIMNSVIFPEFIGGKKDFHPEEIATALDLLNQHGSKEKQKEDCRKLCKVMTTGQIASEEFLKRIFDTLPAV</sequence>
<keyword id="KW-0328">Glycosyltransferase</keyword>
<keyword id="KW-0441">Lipid A biosynthesis</keyword>
<keyword id="KW-0444">Lipid biosynthesis</keyword>
<keyword id="KW-0443">Lipid metabolism</keyword>
<keyword id="KW-0808">Transferase</keyword>
<gene>
    <name type="primary">lpxB</name>
    <name type="ordered locus">CPn_0965</name>
    <name type="ordered locus">CP_0895</name>
    <name type="ordered locus">CpB1002</name>
</gene>
<dbReference type="EC" id="2.4.1.182"/>
<dbReference type="EMBL" id="AE001363">
    <property type="protein sequence ID" value="AAD19101.1"/>
    <property type="molecule type" value="Genomic_DNA"/>
</dbReference>
<dbReference type="EMBL" id="AE002161">
    <property type="protein sequence ID" value="AAF38682.1"/>
    <property type="molecule type" value="Genomic_DNA"/>
</dbReference>
<dbReference type="EMBL" id="BA000008">
    <property type="protein sequence ID" value="BAA99173.1"/>
    <property type="molecule type" value="Genomic_DNA"/>
</dbReference>
<dbReference type="EMBL" id="AE009440">
    <property type="protein sequence ID" value="AAP98931.1"/>
    <property type="molecule type" value="Genomic_DNA"/>
</dbReference>
<dbReference type="PIR" id="B72014">
    <property type="entry name" value="B72014"/>
</dbReference>
<dbReference type="PIR" id="C86611">
    <property type="entry name" value="C86611"/>
</dbReference>
<dbReference type="RefSeq" id="NP_225158.1">
    <property type="nucleotide sequence ID" value="NC_000922.1"/>
</dbReference>
<dbReference type="RefSeq" id="WP_010883598.1">
    <property type="nucleotide sequence ID" value="NZ_LN847257.1"/>
</dbReference>
<dbReference type="SMR" id="Q9Z6U3"/>
<dbReference type="STRING" id="406984.CPK_ORF00380"/>
<dbReference type="GeneID" id="45051022"/>
<dbReference type="KEGG" id="cpa:CP_0895"/>
<dbReference type="KEGG" id="cpj:lpxB"/>
<dbReference type="KEGG" id="cpn:CPn_0965"/>
<dbReference type="KEGG" id="cpt:CpB1002"/>
<dbReference type="PATRIC" id="fig|115713.3.peg.1056"/>
<dbReference type="eggNOG" id="COG0763">
    <property type="taxonomic scope" value="Bacteria"/>
</dbReference>
<dbReference type="eggNOG" id="COG3952">
    <property type="taxonomic scope" value="Bacteria"/>
</dbReference>
<dbReference type="HOGENOM" id="CLU_430672_0_0_0"/>
<dbReference type="OrthoDB" id="9801642at2"/>
<dbReference type="UniPathway" id="UPA00973"/>
<dbReference type="Proteomes" id="UP000000583">
    <property type="component" value="Chromosome"/>
</dbReference>
<dbReference type="Proteomes" id="UP000000801">
    <property type="component" value="Chromosome"/>
</dbReference>
<dbReference type="GO" id="GO:0016020">
    <property type="term" value="C:membrane"/>
    <property type="evidence" value="ECO:0007669"/>
    <property type="project" value="GOC"/>
</dbReference>
<dbReference type="GO" id="GO:0008915">
    <property type="term" value="F:lipid-A-disaccharide synthase activity"/>
    <property type="evidence" value="ECO:0007669"/>
    <property type="project" value="UniProtKB-UniRule"/>
</dbReference>
<dbReference type="GO" id="GO:0005543">
    <property type="term" value="F:phospholipid binding"/>
    <property type="evidence" value="ECO:0007669"/>
    <property type="project" value="TreeGrafter"/>
</dbReference>
<dbReference type="GO" id="GO:0009245">
    <property type="term" value="P:lipid A biosynthetic process"/>
    <property type="evidence" value="ECO:0007669"/>
    <property type="project" value="UniProtKB-UniRule"/>
</dbReference>
<dbReference type="Gene3D" id="1.20.1280.290">
    <property type="match status" value="1"/>
</dbReference>
<dbReference type="HAMAP" id="MF_00392">
    <property type="entry name" value="LpxB"/>
    <property type="match status" value="1"/>
</dbReference>
<dbReference type="InterPro" id="IPR003835">
    <property type="entry name" value="Glyco_trans_19"/>
</dbReference>
<dbReference type="InterPro" id="IPR011499">
    <property type="entry name" value="Lipid_A_biosynth_N"/>
</dbReference>
<dbReference type="NCBIfam" id="TIGR00215">
    <property type="entry name" value="lpxB"/>
    <property type="match status" value="1"/>
</dbReference>
<dbReference type="NCBIfam" id="NF002173">
    <property type="entry name" value="PRK01021.1"/>
    <property type="match status" value="1"/>
</dbReference>
<dbReference type="PANTHER" id="PTHR30372">
    <property type="entry name" value="LIPID-A-DISACCHARIDE SYNTHASE"/>
    <property type="match status" value="1"/>
</dbReference>
<dbReference type="PANTHER" id="PTHR30372:SF4">
    <property type="entry name" value="LIPID-A-DISACCHARIDE SYNTHASE, MITOCHONDRIAL-RELATED"/>
    <property type="match status" value="1"/>
</dbReference>
<dbReference type="Pfam" id="PF07578">
    <property type="entry name" value="LAB_N"/>
    <property type="match status" value="2"/>
</dbReference>
<dbReference type="Pfam" id="PF02684">
    <property type="entry name" value="LpxB"/>
    <property type="match status" value="1"/>
</dbReference>
<dbReference type="SMART" id="SM01259">
    <property type="entry name" value="LAB_N"/>
    <property type="match status" value="2"/>
</dbReference>
<dbReference type="SUPFAM" id="SSF53756">
    <property type="entry name" value="UDP-Glycosyltransferase/glycogen phosphorylase"/>
    <property type="match status" value="1"/>
</dbReference>
<accession>Q9Z6U3</accession>
<feature type="chain" id="PRO_0000190160" description="Lipid-A-disaccharide synthase">
    <location>
        <begin position="1"/>
        <end position="604"/>
    </location>
</feature>
<feature type="region of interest" description="Unknown">
    <location>
        <begin position="1"/>
        <end position="220"/>
    </location>
</feature>
<feature type="region of interest" description="Lipid-A-disaccharide synthase">
    <location>
        <begin position="221"/>
        <end position="604"/>
    </location>
</feature>
<comment type="function">
    <text evidence="1">Condensation of UDP-2,3-diacylglucosamine and 2,3-diacylglucosamine-1-phosphate to form lipid A disaccharide, a precursor of lipid A, a phosphorylated glycolipid that anchors the lipopolysaccharide to the outer membrane of the cell.</text>
</comment>
<comment type="catalytic activity">
    <reaction>
        <text>a lipid X + a UDP-2-N,3-O-bis[(3R)-3-hydroxyacyl]-alpha-D-glucosamine = a lipid A disaccharide + UDP + H(+)</text>
        <dbReference type="Rhea" id="RHEA:67828"/>
        <dbReference type="ChEBI" id="CHEBI:15378"/>
        <dbReference type="ChEBI" id="CHEBI:58223"/>
        <dbReference type="ChEBI" id="CHEBI:137748"/>
        <dbReference type="ChEBI" id="CHEBI:176338"/>
        <dbReference type="ChEBI" id="CHEBI:176343"/>
        <dbReference type="EC" id="2.4.1.182"/>
    </reaction>
</comment>
<comment type="pathway">
    <text>Bacterial outer membrane biogenesis; LPS lipid A biosynthesis.</text>
</comment>
<comment type="similarity">
    <text evidence="2">In the C-terminal section; belongs to the LpxB family.</text>
</comment>
<proteinExistence type="inferred from homology"/>
<evidence type="ECO:0000250" key="1"/>
<evidence type="ECO:0000305" key="2"/>
<protein>
    <recommendedName>
        <fullName>Lipid-A-disaccharide synthase</fullName>
        <ecNumber>2.4.1.182</ecNumber>
    </recommendedName>
</protein>
<organism>
    <name type="scientific">Chlamydia pneumoniae</name>
    <name type="common">Chlamydophila pneumoniae</name>
    <dbReference type="NCBI Taxonomy" id="83558"/>
    <lineage>
        <taxon>Bacteria</taxon>
        <taxon>Pseudomonadati</taxon>
        <taxon>Chlamydiota</taxon>
        <taxon>Chlamydiia</taxon>
        <taxon>Chlamydiales</taxon>
        <taxon>Chlamydiaceae</taxon>
        <taxon>Chlamydia/Chlamydophila group</taxon>
        <taxon>Chlamydia</taxon>
    </lineage>
</organism>
<reference key="1">
    <citation type="journal article" date="1999" name="Nat. Genet.">
        <title>Comparative genomes of Chlamydia pneumoniae and C. trachomatis.</title>
        <authorList>
            <person name="Kalman S."/>
            <person name="Mitchell W.P."/>
            <person name="Marathe R."/>
            <person name="Lammel C.J."/>
            <person name="Fan J."/>
            <person name="Hyman R.W."/>
            <person name="Olinger L."/>
            <person name="Grimwood J."/>
            <person name="Davis R.W."/>
            <person name="Stephens R.S."/>
        </authorList>
    </citation>
    <scope>NUCLEOTIDE SEQUENCE [LARGE SCALE GENOMIC DNA]</scope>
    <source>
        <strain>CWL029</strain>
    </source>
</reference>
<reference key="2">
    <citation type="journal article" date="2000" name="Nucleic Acids Res.">
        <title>Genome sequences of Chlamydia trachomatis MoPn and Chlamydia pneumoniae AR39.</title>
        <authorList>
            <person name="Read T.D."/>
            <person name="Brunham R.C."/>
            <person name="Shen C."/>
            <person name="Gill S.R."/>
            <person name="Heidelberg J.F."/>
            <person name="White O."/>
            <person name="Hickey E.K."/>
            <person name="Peterson J.D."/>
            <person name="Utterback T.R."/>
            <person name="Berry K.J."/>
            <person name="Bass S."/>
            <person name="Linher K.D."/>
            <person name="Weidman J.F."/>
            <person name="Khouri H.M."/>
            <person name="Craven B."/>
            <person name="Bowman C."/>
            <person name="Dodson R.J."/>
            <person name="Gwinn M.L."/>
            <person name="Nelson W.C."/>
            <person name="DeBoy R.T."/>
            <person name="Kolonay J.F."/>
            <person name="McClarty G."/>
            <person name="Salzberg S.L."/>
            <person name="Eisen J.A."/>
            <person name="Fraser C.M."/>
        </authorList>
    </citation>
    <scope>NUCLEOTIDE SEQUENCE [LARGE SCALE GENOMIC DNA]</scope>
    <source>
        <strain>AR39</strain>
    </source>
</reference>
<reference key="3">
    <citation type="journal article" date="2000" name="Nucleic Acids Res.">
        <title>Comparison of whole genome sequences of Chlamydia pneumoniae J138 from Japan and CWL029 from USA.</title>
        <authorList>
            <person name="Shirai M."/>
            <person name="Hirakawa H."/>
            <person name="Kimoto M."/>
            <person name="Tabuchi M."/>
            <person name="Kishi F."/>
            <person name="Ouchi K."/>
            <person name="Shiba T."/>
            <person name="Ishii K."/>
            <person name="Hattori M."/>
            <person name="Kuhara S."/>
            <person name="Nakazawa T."/>
        </authorList>
    </citation>
    <scope>NUCLEOTIDE SEQUENCE [LARGE SCALE GENOMIC DNA]</scope>
    <source>
        <strain>J138</strain>
    </source>
</reference>
<reference key="4">
    <citation type="submission" date="2002-05" db="EMBL/GenBank/DDBJ databases">
        <title>The genome sequence of Chlamydia pneumoniae TW183 and comparison with other Chlamydia strains based on whole genome sequence analysis.</title>
        <authorList>
            <person name="Geng M.M."/>
            <person name="Schuhmacher A."/>
            <person name="Muehldorfer I."/>
            <person name="Bensch K.W."/>
            <person name="Schaefer K.P."/>
            <person name="Schneider S."/>
            <person name="Pohl T."/>
            <person name="Essig A."/>
            <person name="Marre R."/>
            <person name="Melchers K."/>
        </authorList>
    </citation>
    <scope>NUCLEOTIDE SEQUENCE [LARGE SCALE GENOMIC DNA]</scope>
    <source>
        <strain>TW-183</strain>
    </source>
</reference>
<name>LPXB_CHLPN</name>